<comment type="subcellular location">
    <subcellularLocation>
        <location>Mitochondrion</location>
    </subcellularLocation>
</comment>
<comment type="similarity">
    <text evidence="3">Belongs to the heat shock protein 70 family.</text>
</comment>
<feature type="transit peptide" description="Mitochondrion" evidence="1">
    <location>
        <begin position="1"/>
        <end position="51"/>
    </location>
</feature>
<feature type="chain" id="PRO_0000013548" description="Heat shock 70 kDa protein, mitochondrial">
    <location>
        <begin position="52"/>
        <end position="675"/>
    </location>
</feature>
<feature type="region of interest" description="Disordered" evidence="2">
    <location>
        <begin position="638"/>
        <end position="675"/>
    </location>
</feature>
<feature type="compositionally biased region" description="Gly residues" evidence="2">
    <location>
        <begin position="648"/>
        <end position="663"/>
    </location>
</feature>
<feature type="compositionally biased region" description="Acidic residues" evidence="2">
    <location>
        <begin position="666"/>
        <end position="675"/>
    </location>
</feature>
<accession>Q01899</accession>
<organism>
    <name type="scientific">Phaseolus vulgaris</name>
    <name type="common">Kidney bean</name>
    <name type="synonym">French bean</name>
    <dbReference type="NCBI Taxonomy" id="3885"/>
    <lineage>
        <taxon>Eukaryota</taxon>
        <taxon>Viridiplantae</taxon>
        <taxon>Streptophyta</taxon>
        <taxon>Embryophyta</taxon>
        <taxon>Tracheophyta</taxon>
        <taxon>Spermatophyta</taxon>
        <taxon>Magnoliopsida</taxon>
        <taxon>eudicotyledons</taxon>
        <taxon>Gunneridae</taxon>
        <taxon>Pentapetalae</taxon>
        <taxon>rosids</taxon>
        <taxon>fabids</taxon>
        <taxon>Fabales</taxon>
        <taxon>Fabaceae</taxon>
        <taxon>Papilionoideae</taxon>
        <taxon>50 kb inversion clade</taxon>
        <taxon>NPAAA clade</taxon>
        <taxon>indigoferoid/millettioid clade</taxon>
        <taxon>Phaseoleae</taxon>
        <taxon>Phaseolus</taxon>
    </lineage>
</organism>
<protein>
    <recommendedName>
        <fullName>Heat shock 70 kDa protein, mitochondrial</fullName>
    </recommendedName>
</protein>
<proteinExistence type="evidence at transcript level"/>
<sequence>MAAVLRSLRRRDVASATFSAYRSLTGSTKPAYVAQKWSCLARPFSSRPAGNDVIGIDLGTTNSCVSVMEGKNPKVIENSEGARTTPSVVAFNQKGELLVGTPAKRQAVTNPTNTVFGTKRLIGRRFDDPQTQKEMKMVPFKIVKAPNGDAWVEANGQQYSPSQIGAFVLTKMKETAEAYLGKSVSKAVITVPAYFNDAQRQATKDAGRIAGLDVQRIINEPTAAALSYGMNNKEGLIAVFDLGGGTFDVSILEISNGVFEVKATNGDTFLGGEDFDNALLDFLVNEFKRTESIDLSKDRLALQRLREAAEKAKIELSSTSQTEINLPFITADASGAKHLNITLTRSKFEALVNHLIERTKAPCKSCLKDANVSIKDVDEVLLVGGMTRVPKVQEVVLNIFGKSPSKGVNPDEAVAMGAAIQGGILRGDVKELLLLDVTPLSLGIETLGGIFTRLINRNTTIPTKKSQVFSTAADNQTQVGIKVLQGEREMASDNKMLGEFDLVGIPPAPRGLPQIEVTFDIDANGIVTVSAKDKSTGKEQQITIRSSGGLSEDEIEKMVKEAELHAQKDQERKTLIDIRNSADTTIYSIEKSLGEYREKIPSETAKEIEDAVSDLRKAMSGDNVDEIKSKLDAANKAVSKIGEHMSGGSSGGSSAGGSQGGGDQAPEAEYEEVKK</sequence>
<keyword id="KW-0067">ATP-binding</keyword>
<keyword id="KW-0496">Mitochondrion</keyword>
<keyword id="KW-0547">Nucleotide-binding</keyword>
<keyword id="KW-0346">Stress response</keyword>
<keyword id="KW-0809">Transit peptide</keyword>
<name>HSP7M_PHAVU</name>
<dbReference type="EMBL" id="X66874">
    <property type="protein sequence ID" value="CAA47345.1"/>
    <property type="molecule type" value="mRNA"/>
</dbReference>
<dbReference type="PIR" id="S25005">
    <property type="entry name" value="S25005"/>
</dbReference>
<dbReference type="SMR" id="Q01899"/>
<dbReference type="ProMEX" id="Q01899"/>
<dbReference type="eggNOG" id="KOG0102">
    <property type="taxonomic scope" value="Eukaryota"/>
</dbReference>
<dbReference type="PhylomeDB" id="Q01899"/>
<dbReference type="GO" id="GO:0005739">
    <property type="term" value="C:mitochondrion"/>
    <property type="evidence" value="ECO:0007669"/>
    <property type="project" value="UniProtKB-SubCell"/>
</dbReference>
<dbReference type="GO" id="GO:0005524">
    <property type="term" value="F:ATP binding"/>
    <property type="evidence" value="ECO:0007669"/>
    <property type="project" value="UniProtKB-KW"/>
</dbReference>
<dbReference type="GO" id="GO:0140662">
    <property type="term" value="F:ATP-dependent protein folding chaperone"/>
    <property type="evidence" value="ECO:0007669"/>
    <property type="project" value="InterPro"/>
</dbReference>
<dbReference type="GO" id="GO:0051082">
    <property type="term" value="F:unfolded protein binding"/>
    <property type="evidence" value="ECO:0007669"/>
    <property type="project" value="InterPro"/>
</dbReference>
<dbReference type="CDD" id="cd11733">
    <property type="entry name" value="ASKHA_NBD_HSP70_HSPA9"/>
    <property type="match status" value="1"/>
</dbReference>
<dbReference type="FunFam" id="2.60.34.10:FF:000014">
    <property type="entry name" value="Chaperone protein DnaK HSP70"/>
    <property type="match status" value="1"/>
</dbReference>
<dbReference type="FunFam" id="3.30.420.40:FF:000020">
    <property type="entry name" value="Chaperone protein HscA homolog"/>
    <property type="match status" value="1"/>
</dbReference>
<dbReference type="FunFam" id="3.30.30.30:FF:000003">
    <property type="entry name" value="Heat shock protein 9"/>
    <property type="match status" value="1"/>
</dbReference>
<dbReference type="FunFam" id="1.20.1270.10:FF:000001">
    <property type="entry name" value="Molecular chaperone DnaK"/>
    <property type="match status" value="1"/>
</dbReference>
<dbReference type="FunFam" id="3.30.420.40:FF:000004">
    <property type="entry name" value="Molecular chaperone DnaK"/>
    <property type="match status" value="1"/>
</dbReference>
<dbReference type="FunFam" id="3.90.640.10:FF:000003">
    <property type="entry name" value="Molecular chaperone DnaK"/>
    <property type="match status" value="1"/>
</dbReference>
<dbReference type="Gene3D" id="1.20.1270.10">
    <property type="match status" value="1"/>
</dbReference>
<dbReference type="Gene3D" id="3.30.420.40">
    <property type="match status" value="2"/>
</dbReference>
<dbReference type="Gene3D" id="3.90.640.10">
    <property type="entry name" value="Actin, Chain A, domain 4"/>
    <property type="match status" value="1"/>
</dbReference>
<dbReference type="Gene3D" id="2.60.34.10">
    <property type="entry name" value="Substrate Binding Domain Of DNAk, Chain A, domain 1"/>
    <property type="match status" value="1"/>
</dbReference>
<dbReference type="HAMAP" id="MF_00332">
    <property type="entry name" value="DnaK"/>
    <property type="match status" value="1"/>
</dbReference>
<dbReference type="InterPro" id="IPR043129">
    <property type="entry name" value="ATPase_NBD"/>
</dbReference>
<dbReference type="InterPro" id="IPR012725">
    <property type="entry name" value="Chaperone_DnaK"/>
</dbReference>
<dbReference type="InterPro" id="IPR018181">
    <property type="entry name" value="Heat_shock_70_CS"/>
</dbReference>
<dbReference type="InterPro" id="IPR029048">
    <property type="entry name" value="HSP70_C_sf"/>
</dbReference>
<dbReference type="InterPro" id="IPR029047">
    <property type="entry name" value="HSP70_peptide-bd_sf"/>
</dbReference>
<dbReference type="InterPro" id="IPR013126">
    <property type="entry name" value="Hsp_70_fam"/>
</dbReference>
<dbReference type="NCBIfam" id="NF001413">
    <property type="entry name" value="PRK00290.1"/>
    <property type="match status" value="1"/>
</dbReference>
<dbReference type="NCBIfam" id="NF003520">
    <property type="entry name" value="PRK05183.1"/>
    <property type="match status" value="1"/>
</dbReference>
<dbReference type="NCBIfam" id="TIGR02350">
    <property type="entry name" value="prok_dnaK"/>
    <property type="match status" value="1"/>
</dbReference>
<dbReference type="PANTHER" id="PTHR19375">
    <property type="entry name" value="HEAT SHOCK PROTEIN 70KDA"/>
    <property type="match status" value="1"/>
</dbReference>
<dbReference type="Pfam" id="PF00012">
    <property type="entry name" value="HSP70"/>
    <property type="match status" value="1"/>
</dbReference>
<dbReference type="PRINTS" id="PR00301">
    <property type="entry name" value="HEATSHOCK70"/>
</dbReference>
<dbReference type="SUPFAM" id="SSF53067">
    <property type="entry name" value="Actin-like ATPase domain"/>
    <property type="match status" value="2"/>
</dbReference>
<dbReference type="SUPFAM" id="SSF100934">
    <property type="entry name" value="Heat shock protein 70kD (HSP70), C-terminal subdomain"/>
    <property type="match status" value="1"/>
</dbReference>
<dbReference type="SUPFAM" id="SSF100920">
    <property type="entry name" value="Heat shock protein 70kD (HSP70), peptide-binding domain"/>
    <property type="match status" value="1"/>
</dbReference>
<dbReference type="PROSITE" id="PS00297">
    <property type="entry name" value="HSP70_1"/>
    <property type="match status" value="1"/>
</dbReference>
<dbReference type="PROSITE" id="PS00329">
    <property type="entry name" value="HSP70_2"/>
    <property type="match status" value="1"/>
</dbReference>
<dbReference type="PROSITE" id="PS01036">
    <property type="entry name" value="HSP70_3"/>
    <property type="match status" value="1"/>
</dbReference>
<evidence type="ECO:0000255" key="1"/>
<evidence type="ECO:0000256" key="2">
    <source>
        <dbReference type="SAM" id="MobiDB-lite"/>
    </source>
</evidence>
<evidence type="ECO:0000305" key="3"/>
<reference key="1">
    <citation type="journal article" date="1993" name="Plant J.">
        <title>Molecular characterization of a 70 kDa heat-shock protein of bean mitochondria.</title>
        <authorList>
            <person name="Vidal V."/>
            <person name="Ranty B."/>
            <person name="Dillenschneider M."/>
            <person name="Charpenteau M."/>
            <person name="Ranjeva R."/>
        </authorList>
    </citation>
    <scope>NUCLEOTIDE SEQUENCE [MRNA]</scope>
</reference>